<name>MNTP_ENT38</name>
<gene>
    <name evidence="1" type="primary">mntP</name>
    <name type="ordered locus">Ent638_2390</name>
</gene>
<proteinExistence type="inferred from homology"/>
<organism>
    <name type="scientific">Enterobacter sp. (strain 638)</name>
    <dbReference type="NCBI Taxonomy" id="399742"/>
    <lineage>
        <taxon>Bacteria</taxon>
        <taxon>Pseudomonadati</taxon>
        <taxon>Pseudomonadota</taxon>
        <taxon>Gammaproteobacteria</taxon>
        <taxon>Enterobacterales</taxon>
        <taxon>Enterobacteriaceae</taxon>
        <taxon>Enterobacter</taxon>
    </lineage>
</organism>
<accession>A4WBH9</accession>
<reference key="1">
    <citation type="journal article" date="2010" name="PLoS Genet.">
        <title>Genome sequence of the plant growth promoting endophytic bacterium Enterobacter sp. 638.</title>
        <authorList>
            <person name="Taghavi S."/>
            <person name="van der Lelie D."/>
            <person name="Hoffman A."/>
            <person name="Zhang Y.B."/>
            <person name="Walla M.D."/>
            <person name="Vangronsveld J."/>
            <person name="Newman L."/>
            <person name="Monchy S."/>
        </authorList>
    </citation>
    <scope>NUCLEOTIDE SEQUENCE [LARGE SCALE GENOMIC DNA]</scope>
    <source>
        <strain>638</strain>
    </source>
</reference>
<dbReference type="EMBL" id="CP000653">
    <property type="protein sequence ID" value="ABP61059.1"/>
    <property type="status" value="ALT_INIT"/>
    <property type="molecule type" value="Genomic_DNA"/>
</dbReference>
<dbReference type="RefSeq" id="WP_041689678.1">
    <property type="nucleotide sequence ID" value="NC_009436.1"/>
</dbReference>
<dbReference type="STRING" id="399742.Ent638_2390"/>
<dbReference type="KEGG" id="ent:Ent638_2390"/>
<dbReference type="eggNOG" id="COG1971">
    <property type="taxonomic scope" value="Bacteria"/>
</dbReference>
<dbReference type="HOGENOM" id="CLU_096410_0_0_6"/>
<dbReference type="OrthoDB" id="9811590at2"/>
<dbReference type="Proteomes" id="UP000000230">
    <property type="component" value="Chromosome"/>
</dbReference>
<dbReference type="GO" id="GO:0005886">
    <property type="term" value="C:plasma membrane"/>
    <property type="evidence" value="ECO:0007669"/>
    <property type="project" value="UniProtKB-SubCell"/>
</dbReference>
<dbReference type="GO" id="GO:0005384">
    <property type="term" value="F:manganese ion transmembrane transporter activity"/>
    <property type="evidence" value="ECO:0007669"/>
    <property type="project" value="UniProtKB-UniRule"/>
</dbReference>
<dbReference type="HAMAP" id="MF_01521">
    <property type="entry name" value="MntP_pump"/>
    <property type="match status" value="1"/>
</dbReference>
<dbReference type="InterPro" id="IPR003810">
    <property type="entry name" value="Mntp/YtaF"/>
</dbReference>
<dbReference type="InterPro" id="IPR022929">
    <property type="entry name" value="Put_MntP"/>
</dbReference>
<dbReference type="NCBIfam" id="NF008546">
    <property type="entry name" value="PRK11469.1"/>
    <property type="match status" value="1"/>
</dbReference>
<dbReference type="PANTHER" id="PTHR35529">
    <property type="entry name" value="MANGANESE EFFLUX PUMP MNTP-RELATED"/>
    <property type="match status" value="1"/>
</dbReference>
<dbReference type="PANTHER" id="PTHR35529:SF1">
    <property type="entry name" value="MANGANESE EFFLUX PUMP MNTP-RELATED"/>
    <property type="match status" value="1"/>
</dbReference>
<dbReference type="Pfam" id="PF02659">
    <property type="entry name" value="Mntp"/>
    <property type="match status" value="1"/>
</dbReference>
<keyword id="KW-0997">Cell inner membrane</keyword>
<keyword id="KW-1003">Cell membrane</keyword>
<keyword id="KW-0406">Ion transport</keyword>
<keyword id="KW-0464">Manganese</keyword>
<keyword id="KW-0472">Membrane</keyword>
<keyword id="KW-0812">Transmembrane</keyword>
<keyword id="KW-1133">Transmembrane helix</keyword>
<keyword id="KW-0813">Transport</keyword>
<sequence length="188" mass="19995">MNISATILLAFGMSMDAFAASIGKGATLHKPKFSEALRTGLIFGAIETLTPLIGWSLGMLASQFILEWNHWIAFTLLVFLGGRMVIEGFRNTPDEDDAPQYRHGFWILVTTAIATSLDAMAVGVGLAFLQVNIIATALAIGCATLIMSTIGMMVGRFIGPLLGKRAEILGGIVLIGIGGQILWSHFAG</sequence>
<feature type="chain" id="PRO_0000315566" description="Putative manganese efflux pump MntP">
    <location>
        <begin position="1"/>
        <end position="188"/>
    </location>
</feature>
<feature type="transmembrane region" description="Helical" evidence="1">
    <location>
        <begin position="3"/>
        <end position="23"/>
    </location>
</feature>
<feature type="transmembrane region" description="Helical" evidence="1">
    <location>
        <begin position="41"/>
        <end position="61"/>
    </location>
</feature>
<feature type="transmembrane region" description="Helical" evidence="1">
    <location>
        <begin position="62"/>
        <end position="82"/>
    </location>
</feature>
<feature type="transmembrane region" description="Helical" evidence="1">
    <location>
        <begin position="106"/>
        <end position="128"/>
    </location>
</feature>
<feature type="transmembrane region" description="Helical" evidence="1">
    <location>
        <begin position="143"/>
        <end position="163"/>
    </location>
</feature>
<feature type="transmembrane region" description="Helical" evidence="1">
    <location>
        <begin position="168"/>
        <end position="188"/>
    </location>
</feature>
<comment type="function">
    <text evidence="1">Probably functions as a manganese efflux pump.</text>
</comment>
<comment type="subcellular location">
    <subcellularLocation>
        <location evidence="1">Cell inner membrane</location>
        <topology evidence="1">Multi-pass membrane protein</topology>
    </subcellularLocation>
</comment>
<comment type="similarity">
    <text evidence="1">Belongs to the MntP (TC 9.B.29) family.</text>
</comment>
<comment type="sequence caution" evidence="2">
    <conflict type="erroneous initiation">
        <sequence resource="EMBL-CDS" id="ABP61059"/>
    </conflict>
</comment>
<protein>
    <recommendedName>
        <fullName evidence="1">Putative manganese efflux pump MntP</fullName>
    </recommendedName>
</protein>
<evidence type="ECO:0000255" key="1">
    <source>
        <dbReference type="HAMAP-Rule" id="MF_01521"/>
    </source>
</evidence>
<evidence type="ECO:0000305" key="2"/>